<dbReference type="EMBL" id="CR954247">
    <property type="protein sequence ID" value="CAI89542.1"/>
    <property type="molecule type" value="Genomic_DNA"/>
</dbReference>
<dbReference type="SMR" id="Q3ICG2"/>
<dbReference type="STRING" id="326442.PSHAb0505"/>
<dbReference type="KEGG" id="pha:PSHAb0505"/>
<dbReference type="PATRIC" id="fig|326442.8.peg.3413"/>
<dbReference type="eggNOG" id="COG0851">
    <property type="taxonomic scope" value="Bacteria"/>
</dbReference>
<dbReference type="HOGENOM" id="CLU_137929_2_2_6"/>
<dbReference type="BioCyc" id="PHAL326442:PSHA_RS17265-MONOMER"/>
<dbReference type="Proteomes" id="UP000006843">
    <property type="component" value="Chromosome II"/>
</dbReference>
<dbReference type="GO" id="GO:0051301">
    <property type="term" value="P:cell division"/>
    <property type="evidence" value="ECO:0007669"/>
    <property type="project" value="UniProtKB-KW"/>
</dbReference>
<dbReference type="GO" id="GO:0032955">
    <property type="term" value="P:regulation of division septum assembly"/>
    <property type="evidence" value="ECO:0007669"/>
    <property type="project" value="InterPro"/>
</dbReference>
<dbReference type="FunFam" id="3.30.1070.10:FF:000001">
    <property type="entry name" value="Cell division topological specificity factor"/>
    <property type="match status" value="1"/>
</dbReference>
<dbReference type="Gene3D" id="3.30.1070.10">
    <property type="entry name" value="Cell division topological specificity factor MinE"/>
    <property type="match status" value="1"/>
</dbReference>
<dbReference type="HAMAP" id="MF_00262">
    <property type="entry name" value="MinE"/>
    <property type="match status" value="1"/>
</dbReference>
<dbReference type="InterPro" id="IPR005527">
    <property type="entry name" value="MinE"/>
</dbReference>
<dbReference type="InterPro" id="IPR036707">
    <property type="entry name" value="MinE_sf"/>
</dbReference>
<dbReference type="NCBIfam" id="TIGR01215">
    <property type="entry name" value="minE"/>
    <property type="match status" value="1"/>
</dbReference>
<dbReference type="NCBIfam" id="NF001422">
    <property type="entry name" value="PRK00296.1"/>
    <property type="match status" value="1"/>
</dbReference>
<dbReference type="Pfam" id="PF03776">
    <property type="entry name" value="MinE"/>
    <property type="match status" value="1"/>
</dbReference>
<dbReference type="SUPFAM" id="SSF55229">
    <property type="entry name" value="Cell division protein MinE topological specificity domain"/>
    <property type="match status" value="1"/>
</dbReference>
<keyword id="KW-0131">Cell cycle</keyword>
<keyword id="KW-0132">Cell division</keyword>
<keyword id="KW-1185">Reference proteome</keyword>
<name>MINE_PSET1</name>
<evidence type="ECO:0000255" key="1">
    <source>
        <dbReference type="HAMAP-Rule" id="MF_00262"/>
    </source>
</evidence>
<comment type="function">
    <text evidence="1">Prevents the cell division inhibition by proteins MinC and MinD at internal division sites while permitting inhibition at polar sites. This ensures cell division at the proper site by restricting the formation of a division septum at the midpoint of the long axis of the cell.</text>
</comment>
<comment type="similarity">
    <text evidence="1">Belongs to the MinE family.</text>
</comment>
<sequence>MSLLDYFRSEKKNSASLAKERLQIIVAHERSQRGTPDYLPQLKQDILDVIRKYVNVSSDAVQVQFDQNEDDLAVLELNVTLPDEEPKI</sequence>
<reference key="1">
    <citation type="journal article" date="2005" name="Genome Res.">
        <title>Coping with cold: the genome of the versatile marine Antarctica bacterium Pseudoalteromonas haloplanktis TAC125.</title>
        <authorList>
            <person name="Medigue C."/>
            <person name="Krin E."/>
            <person name="Pascal G."/>
            <person name="Barbe V."/>
            <person name="Bernsel A."/>
            <person name="Bertin P.N."/>
            <person name="Cheung F."/>
            <person name="Cruveiller S."/>
            <person name="D'Amico S."/>
            <person name="Duilio A."/>
            <person name="Fang G."/>
            <person name="Feller G."/>
            <person name="Ho C."/>
            <person name="Mangenot S."/>
            <person name="Marino G."/>
            <person name="Nilsson J."/>
            <person name="Parrilli E."/>
            <person name="Rocha E.P.C."/>
            <person name="Rouy Z."/>
            <person name="Sekowska A."/>
            <person name="Tutino M.L."/>
            <person name="Vallenet D."/>
            <person name="von Heijne G."/>
            <person name="Danchin A."/>
        </authorList>
    </citation>
    <scope>NUCLEOTIDE SEQUENCE [LARGE SCALE GENOMIC DNA]</scope>
    <source>
        <strain>TAC 125</strain>
    </source>
</reference>
<accession>Q3ICG2</accession>
<protein>
    <recommendedName>
        <fullName evidence="1">Cell division topological specificity factor</fullName>
    </recommendedName>
</protein>
<proteinExistence type="inferred from homology"/>
<gene>
    <name evidence="1" type="primary">minE</name>
    <name type="ordered locus">PSHAb0505</name>
</gene>
<organism>
    <name type="scientific">Pseudoalteromonas translucida (strain TAC 125)</name>
    <dbReference type="NCBI Taxonomy" id="326442"/>
    <lineage>
        <taxon>Bacteria</taxon>
        <taxon>Pseudomonadati</taxon>
        <taxon>Pseudomonadota</taxon>
        <taxon>Gammaproteobacteria</taxon>
        <taxon>Alteromonadales</taxon>
        <taxon>Pseudoalteromonadaceae</taxon>
        <taxon>Pseudoalteromonas</taxon>
    </lineage>
</organism>
<feature type="chain" id="PRO_0000298158" description="Cell division topological specificity factor">
    <location>
        <begin position="1"/>
        <end position="88"/>
    </location>
</feature>